<keyword id="KW-0030">Aminoacyl-tRNA synthetase</keyword>
<keyword id="KW-0067">ATP-binding</keyword>
<keyword id="KW-0963">Cytoplasm</keyword>
<keyword id="KW-0436">Ligase</keyword>
<keyword id="KW-0479">Metal-binding</keyword>
<keyword id="KW-0547">Nucleotide-binding</keyword>
<keyword id="KW-0648">Protein biosynthesis</keyword>
<keyword id="KW-1185">Reference proteome</keyword>
<keyword id="KW-0694">RNA-binding</keyword>
<keyword id="KW-0820">tRNA-binding</keyword>
<keyword id="KW-0862">Zinc</keyword>
<organism>
    <name type="scientific">Aeropyrum pernix (strain ATCC 700893 / DSM 11879 / JCM 9820 / NBRC 100138 / K1)</name>
    <dbReference type="NCBI Taxonomy" id="272557"/>
    <lineage>
        <taxon>Archaea</taxon>
        <taxon>Thermoproteota</taxon>
        <taxon>Thermoprotei</taxon>
        <taxon>Desulfurococcales</taxon>
        <taxon>Desulfurococcaceae</taxon>
        <taxon>Aeropyrum</taxon>
    </lineage>
</organism>
<name>SYA_AERPE</name>
<reference key="1">
    <citation type="journal article" date="1999" name="DNA Res.">
        <title>Complete genome sequence of an aerobic hyper-thermophilic crenarchaeon, Aeropyrum pernix K1.</title>
        <authorList>
            <person name="Kawarabayasi Y."/>
            <person name="Hino Y."/>
            <person name="Horikawa H."/>
            <person name="Yamazaki S."/>
            <person name="Haikawa Y."/>
            <person name="Jin-no K."/>
            <person name="Takahashi M."/>
            <person name="Sekine M."/>
            <person name="Baba S."/>
            <person name="Ankai A."/>
            <person name="Kosugi H."/>
            <person name="Hosoyama A."/>
            <person name="Fukui S."/>
            <person name="Nagai Y."/>
            <person name="Nishijima K."/>
            <person name="Nakazawa H."/>
            <person name="Takamiya M."/>
            <person name="Masuda S."/>
            <person name="Funahashi T."/>
            <person name="Tanaka T."/>
            <person name="Kudoh Y."/>
            <person name="Yamazaki J."/>
            <person name="Kushida N."/>
            <person name="Oguchi A."/>
            <person name="Aoki K."/>
            <person name="Kubota K."/>
            <person name="Nakamura Y."/>
            <person name="Nomura N."/>
            <person name="Sako Y."/>
            <person name="Kikuchi H."/>
        </authorList>
    </citation>
    <scope>NUCLEOTIDE SEQUENCE [LARGE SCALE GENOMIC DNA]</scope>
    <source>
        <strain>ATCC 700893 / DSM 11879 / JCM 9820 / NBRC 100138 / K1</strain>
    </source>
</reference>
<gene>
    <name evidence="1" type="primary">alaS</name>
    <name type="ordered locus">APE_2166</name>
</gene>
<feature type="chain" id="PRO_0000075259" description="Alanine--tRNA ligase">
    <location>
        <begin position="1"/>
        <end position="900"/>
    </location>
</feature>
<feature type="binding site" evidence="1">
    <location>
        <position position="587"/>
    </location>
    <ligand>
        <name>Zn(2+)</name>
        <dbReference type="ChEBI" id="CHEBI:29105"/>
    </ligand>
</feature>
<feature type="binding site" evidence="1">
    <location>
        <position position="591"/>
    </location>
    <ligand>
        <name>Zn(2+)</name>
        <dbReference type="ChEBI" id="CHEBI:29105"/>
    </ligand>
</feature>
<feature type="binding site" evidence="1">
    <location>
        <position position="691"/>
    </location>
    <ligand>
        <name>Zn(2+)</name>
        <dbReference type="ChEBI" id="CHEBI:29105"/>
    </ligand>
</feature>
<feature type="binding site" evidence="1">
    <location>
        <position position="695"/>
    </location>
    <ligand>
        <name>Zn(2+)</name>
        <dbReference type="ChEBI" id="CHEBI:29105"/>
    </ligand>
</feature>
<sequence length="900" mass="102333">MGFVRKEGARCREAFWTLNPEFSEPQDTPCVEYWFDKVKSVSGMSVGEAREAFLSFFEKHGHTRVPPRPVVARWREDLYLTIASIVVFQPHVTSGLVPPPANPLVISQPSIRLEDIDNVGITIGRHLTSFEMAAHHAFNYPDRQVYWKEETVRLAFEFFTQVLGIPPELIVFKESWWEGGGNAGPSFEVAVGGLELATLVFMKYRVVDGRYEEIPLKIVDTGYGVERLAWFTQKTPTAFHAIYGSLVDDFRRMLGVEKPDENVMWAAFRVAGFLDPEDPESLRNYYQTVASLAGGDVETVRSILTREARLYSVLDHTKTIALMLGDGIVPSNSGEGYLARLVVRRALRQLSLLNAEVPLVDLVERQARFWMRDFPQLKENLDYILDAVSLEEERFRDVLRKARSIVERELKRKKRLGVDDLIRLYDSMGVPPEIAAEIAASRGAPVEVPHNFYSLVAARHRGPEKIRGYGFDETGLPRDVEEWARRFGETRRVFHEDPYAKAWKARVLGVKGRYLVADSTIFYPTGGGQIHDTGVIRVNNQQYRIIDVQKVGDAIVHVAEREIAAEPGDEVWMEIDWERRYSIMRHHTVTHVLIAAARRVLGRHAWQAGAEKTEEKGRLDITHHRPLTRDDIEKLENVVNQVIRERRRVWEDMVDKNEAEEKYGFTIYQGGVPMEKRLRLVFVEDWDVEACFGTHVRNTGEIGGFKIISYSRIQDGVVRLEYVAGDRVAIYARELEERLARIGDAVKAPRGQEEARVKGLIASLEQAREDLKRYRDYWVKTIEEAYISRARRVNGVKVLAVESLEKDRRTVQEILRKLTSRHEDLIAALVVENEGNTQVEIAAGPKAAEKVDLGALVKIVIKKVGGRGGGRGSYASLRVEGRLSADKVEELLADALENVL</sequence>
<dbReference type="EC" id="6.1.1.7" evidence="1"/>
<dbReference type="EMBL" id="BA000002">
    <property type="protein sequence ID" value="BAA81177.1"/>
    <property type="molecule type" value="Genomic_DNA"/>
</dbReference>
<dbReference type="PIR" id="A72524">
    <property type="entry name" value="A72524"/>
</dbReference>
<dbReference type="SMR" id="Q9Y9X3"/>
<dbReference type="STRING" id="272557.APE_2166"/>
<dbReference type="EnsemblBacteria" id="BAA81177">
    <property type="protein sequence ID" value="BAA81177"/>
    <property type="gene ID" value="APE_2166"/>
</dbReference>
<dbReference type="KEGG" id="ape:APE_2166"/>
<dbReference type="PATRIC" id="fig|272557.25.peg.1446"/>
<dbReference type="eggNOG" id="arCOG01255">
    <property type="taxonomic scope" value="Archaea"/>
</dbReference>
<dbReference type="Proteomes" id="UP000002518">
    <property type="component" value="Chromosome"/>
</dbReference>
<dbReference type="GO" id="GO:0005737">
    <property type="term" value="C:cytoplasm"/>
    <property type="evidence" value="ECO:0007669"/>
    <property type="project" value="UniProtKB-SubCell"/>
</dbReference>
<dbReference type="GO" id="GO:0004813">
    <property type="term" value="F:alanine-tRNA ligase activity"/>
    <property type="evidence" value="ECO:0007669"/>
    <property type="project" value="UniProtKB-UniRule"/>
</dbReference>
<dbReference type="GO" id="GO:0002161">
    <property type="term" value="F:aminoacyl-tRNA deacylase activity"/>
    <property type="evidence" value="ECO:0007669"/>
    <property type="project" value="TreeGrafter"/>
</dbReference>
<dbReference type="GO" id="GO:0005524">
    <property type="term" value="F:ATP binding"/>
    <property type="evidence" value="ECO:0007669"/>
    <property type="project" value="UniProtKB-UniRule"/>
</dbReference>
<dbReference type="GO" id="GO:0000049">
    <property type="term" value="F:tRNA binding"/>
    <property type="evidence" value="ECO:0007669"/>
    <property type="project" value="UniProtKB-KW"/>
</dbReference>
<dbReference type="GO" id="GO:0008270">
    <property type="term" value="F:zinc ion binding"/>
    <property type="evidence" value="ECO:0007669"/>
    <property type="project" value="UniProtKB-UniRule"/>
</dbReference>
<dbReference type="GO" id="GO:0006419">
    <property type="term" value="P:alanyl-tRNA aminoacylation"/>
    <property type="evidence" value="ECO:0007669"/>
    <property type="project" value="UniProtKB-UniRule"/>
</dbReference>
<dbReference type="CDD" id="cd00673">
    <property type="entry name" value="AlaRS_core"/>
    <property type="match status" value="1"/>
</dbReference>
<dbReference type="Gene3D" id="2.40.30.130">
    <property type="match status" value="1"/>
</dbReference>
<dbReference type="Gene3D" id="3.10.310.40">
    <property type="match status" value="1"/>
</dbReference>
<dbReference type="Gene3D" id="3.30.54.20">
    <property type="match status" value="1"/>
</dbReference>
<dbReference type="Gene3D" id="3.30.930.10">
    <property type="entry name" value="Bira Bifunctional Protein, Domain 2"/>
    <property type="match status" value="1"/>
</dbReference>
<dbReference type="Gene3D" id="3.30.980.10">
    <property type="entry name" value="Threonyl-trna Synthetase, Chain A, domain 2"/>
    <property type="match status" value="1"/>
</dbReference>
<dbReference type="HAMAP" id="MF_00036_A">
    <property type="entry name" value="Ala_tRNA_synth_A"/>
    <property type="match status" value="1"/>
</dbReference>
<dbReference type="InterPro" id="IPR045864">
    <property type="entry name" value="aa-tRNA-synth_II/BPL/LPL"/>
</dbReference>
<dbReference type="InterPro" id="IPR002318">
    <property type="entry name" value="Ala-tRNA-lgiase_IIc"/>
</dbReference>
<dbReference type="InterPro" id="IPR018162">
    <property type="entry name" value="Ala-tRNA-ligase_IIc_anticod-bd"/>
</dbReference>
<dbReference type="InterPro" id="IPR018165">
    <property type="entry name" value="Ala-tRNA-synth_IIc_core"/>
</dbReference>
<dbReference type="InterPro" id="IPR018164">
    <property type="entry name" value="Ala-tRNA-synth_IIc_N"/>
</dbReference>
<dbReference type="InterPro" id="IPR022429">
    <property type="entry name" value="Ala-tRNA_lgiase_arc"/>
</dbReference>
<dbReference type="InterPro" id="IPR050058">
    <property type="entry name" value="Ala-tRNA_ligase"/>
</dbReference>
<dbReference type="InterPro" id="IPR003156">
    <property type="entry name" value="DHHA1_dom"/>
</dbReference>
<dbReference type="InterPro" id="IPR018163">
    <property type="entry name" value="Thr/Ala-tRNA-synth_IIc_edit"/>
</dbReference>
<dbReference type="InterPro" id="IPR009000">
    <property type="entry name" value="Transl_B-barrel_sf"/>
</dbReference>
<dbReference type="InterPro" id="IPR012947">
    <property type="entry name" value="tRNA_SAD"/>
</dbReference>
<dbReference type="NCBIfam" id="TIGR03683">
    <property type="entry name" value="A-tRNA_syn_arch"/>
    <property type="match status" value="1"/>
</dbReference>
<dbReference type="NCBIfam" id="TIGR00344">
    <property type="entry name" value="alaS"/>
    <property type="match status" value="1"/>
</dbReference>
<dbReference type="PANTHER" id="PTHR11777:SF9">
    <property type="entry name" value="ALANINE--TRNA LIGASE, CYTOPLASMIC"/>
    <property type="match status" value="1"/>
</dbReference>
<dbReference type="PANTHER" id="PTHR11777">
    <property type="entry name" value="ALANYL-TRNA SYNTHETASE"/>
    <property type="match status" value="1"/>
</dbReference>
<dbReference type="Pfam" id="PF02272">
    <property type="entry name" value="DHHA1"/>
    <property type="match status" value="1"/>
</dbReference>
<dbReference type="Pfam" id="PF01411">
    <property type="entry name" value="tRNA-synt_2c"/>
    <property type="match status" value="1"/>
</dbReference>
<dbReference type="Pfam" id="PF07973">
    <property type="entry name" value="tRNA_SAD"/>
    <property type="match status" value="1"/>
</dbReference>
<dbReference type="PRINTS" id="PR00980">
    <property type="entry name" value="TRNASYNTHALA"/>
</dbReference>
<dbReference type="SMART" id="SM00863">
    <property type="entry name" value="tRNA_SAD"/>
    <property type="match status" value="1"/>
</dbReference>
<dbReference type="SUPFAM" id="SSF55681">
    <property type="entry name" value="Class II aaRS and biotin synthetases"/>
    <property type="match status" value="1"/>
</dbReference>
<dbReference type="SUPFAM" id="SSF101353">
    <property type="entry name" value="Putative anticodon-binding domain of alanyl-tRNA synthetase (AlaRS)"/>
    <property type="match status" value="1"/>
</dbReference>
<dbReference type="SUPFAM" id="SSF55186">
    <property type="entry name" value="ThrRS/AlaRS common domain"/>
    <property type="match status" value="1"/>
</dbReference>
<dbReference type="SUPFAM" id="SSF50447">
    <property type="entry name" value="Translation proteins"/>
    <property type="match status" value="1"/>
</dbReference>
<dbReference type="PROSITE" id="PS50860">
    <property type="entry name" value="AA_TRNA_LIGASE_II_ALA"/>
    <property type="match status" value="1"/>
</dbReference>
<proteinExistence type="inferred from homology"/>
<protein>
    <recommendedName>
        <fullName evidence="1">Alanine--tRNA ligase</fullName>
        <ecNumber evidence="1">6.1.1.7</ecNumber>
    </recommendedName>
    <alternativeName>
        <fullName evidence="1">Alanyl-tRNA synthetase</fullName>
        <shortName evidence="1">AlaRS</shortName>
    </alternativeName>
</protein>
<accession>Q9Y9X3</accession>
<evidence type="ECO:0000255" key="1">
    <source>
        <dbReference type="HAMAP-Rule" id="MF_00036"/>
    </source>
</evidence>
<comment type="function">
    <text evidence="1">Catalyzes the attachment of alanine to tRNA(Ala) in a two-step reaction: alanine is first activated by ATP to form Ala-AMP and then transferred to the acceptor end of tRNA(Ala). Also edits incorrectly charged Ser-tRNA(Ala) and Gly-tRNA(Ala) via its editing domain.</text>
</comment>
<comment type="catalytic activity">
    <reaction evidence="1">
        <text>tRNA(Ala) + L-alanine + ATP = L-alanyl-tRNA(Ala) + AMP + diphosphate</text>
        <dbReference type="Rhea" id="RHEA:12540"/>
        <dbReference type="Rhea" id="RHEA-COMP:9657"/>
        <dbReference type="Rhea" id="RHEA-COMP:9923"/>
        <dbReference type="ChEBI" id="CHEBI:30616"/>
        <dbReference type="ChEBI" id="CHEBI:33019"/>
        <dbReference type="ChEBI" id="CHEBI:57972"/>
        <dbReference type="ChEBI" id="CHEBI:78442"/>
        <dbReference type="ChEBI" id="CHEBI:78497"/>
        <dbReference type="ChEBI" id="CHEBI:456215"/>
        <dbReference type="EC" id="6.1.1.7"/>
    </reaction>
</comment>
<comment type="cofactor">
    <cofactor evidence="1">
        <name>Zn(2+)</name>
        <dbReference type="ChEBI" id="CHEBI:29105"/>
    </cofactor>
    <text evidence="1">Binds 1 zinc ion per subunit.</text>
</comment>
<comment type="subcellular location">
    <subcellularLocation>
        <location evidence="1">Cytoplasm</location>
    </subcellularLocation>
</comment>
<comment type="domain">
    <text evidence="1">Consists of three domains; the N-terminal catalytic domain, the editing domain and the C-terminal C-Ala domain. The editing domain removes incorrectly charged amino acids, while the C-Ala domain, along with tRNA(Ala), serves as a bridge to cooperatively bring together the editing and aminoacylation centers thus stimulating deacylation of misacylated tRNAs.</text>
</comment>
<comment type="similarity">
    <text evidence="1">Belongs to the class-II aminoacyl-tRNA synthetase family.</text>
</comment>